<name>AROA_THEPX</name>
<accession>B0K0J1</accession>
<reference key="1">
    <citation type="submission" date="2008-01" db="EMBL/GenBank/DDBJ databases">
        <title>Complete sequence of Thermoanaerobacter sp. X514.</title>
        <authorList>
            <consortium name="US DOE Joint Genome Institute"/>
            <person name="Copeland A."/>
            <person name="Lucas S."/>
            <person name="Lapidus A."/>
            <person name="Barry K."/>
            <person name="Glavina del Rio T."/>
            <person name="Dalin E."/>
            <person name="Tice H."/>
            <person name="Pitluck S."/>
            <person name="Bruce D."/>
            <person name="Goodwin L."/>
            <person name="Saunders E."/>
            <person name="Brettin T."/>
            <person name="Detter J.C."/>
            <person name="Han C."/>
            <person name="Schmutz J."/>
            <person name="Larimer F."/>
            <person name="Land M."/>
            <person name="Hauser L."/>
            <person name="Kyrpides N."/>
            <person name="Kim E."/>
            <person name="Hemme C."/>
            <person name="Fields M.W."/>
            <person name="He Z."/>
            <person name="Zhou J."/>
            <person name="Richardson P."/>
        </authorList>
    </citation>
    <scope>NUCLEOTIDE SEQUENCE [LARGE SCALE GENOMIC DNA]</scope>
    <source>
        <strain>X514</strain>
    </source>
</reference>
<gene>
    <name evidence="1" type="primary">aroA</name>
    <name type="ordered locus">Teth514_1427</name>
</gene>
<dbReference type="EC" id="2.5.1.19" evidence="1"/>
<dbReference type="EMBL" id="CP000923">
    <property type="protein sequence ID" value="ABY92716.1"/>
    <property type="molecule type" value="Genomic_DNA"/>
</dbReference>
<dbReference type="RefSeq" id="WP_003868616.1">
    <property type="nucleotide sequence ID" value="NC_010320.1"/>
</dbReference>
<dbReference type="SMR" id="B0K0J1"/>
<dbReference type="KEGG" id="tex:Teth514_1427"/>
<dbReference type="HOGENOM" id="CLU_024321_0_1_9"/>
<dbReference type="UniPathway" id="UPA00053">
    <property type="reaction ID" value="UER00089"/>
</dbReference>
<dbReference type="Proteomes" id="UP000002155">
    <property type="component" value="Chromosome"/>
</dbReference>
<dbReference type="GO" id="GO:0005737">
    <property type="term" value="C:cytoplasm"/>
    <property type="evidence" value="ECO:0007669"/>
    <property type="project" value="UniProtKB-SubCell"/>
</dbReference>
<dbReference type="GO" id="GO:0003866">
    <property type="term" value="F:3-phosphoshikimate 1-carboxyvinyltransferase activity"/>
    <property type="evidence" value="ECO:0007669"/>
    <property type="project" value="UniProtKB-UniRule"/>
</dbReference>
<dbReference type="GO" id="GO:0008652">
    <property type="term" value="P:amino acid biosynthetic process"/>
    <property type="evidence" value="ECO:0007669"/>
    <property type="project" value="UniProtKB-KW"/>
</dbReference>
<dbReference type="GO" id="GO:0009073">
    <property type="term" value="P:aromatic amino acid family biosynthetic process"/>
    <property type="evidence" value="ECO:0007669"/>
    <property type="project" value="UniProtKB-KW"/>
</dbReference>
<dbReference type="GO" id="GO:0009423">
    <property type="term" value="P:chorismate biosynthetic process"/>
    <property type="evidence" value="ECO:0007669"/>
    <property type="project" value="UniProtKB-UniRule"/>
</dbReference>
<dbReference type="CDD" id="cd01556">
    <property type="entry name" value="EPSP_synthase"/>
    <property type="match status" value="1"/>
</dbReference>
<dbReference type="FunFam" id="3.65.10.10:FF:000005">
    <property type="entry name" value="3-phosphoshikimate 1-carboxyvinyltransferase"/>
    <property type="match status" value="1"/>
</dbReference>
<dbReference type="FunFam" id="3.65.10.10:FF:000006">
    <property type="entry name" value="3-phosphoshikimate 1-carboxyvinyltransferase"/>
    <property type="match status" value="1"/>
</dbReference>
<dbReference type="Gene3D" id="3.65.10.10">
    <property type="entry name" value="Enolpyruvate transferase domain"/>
    <property type="match status" value="2"/>
</dbReference>
<dbReference type="HAMAP" id="MF_00210">
    <property type="entry name" value="EPSP_synth"/>
    <property type="match status" value="1"/>
</dbReference>
<dbReference type="InterPro" id="IPR001986">
    <property type="entry name" value="Enolpyruvate_Tfrase_dom"/>
</dbReference>
<dbReference type="InterPro" id="IPR036968">
    <property type="entry name" value="Enolpyruvate_Tfrase_sf"/>
</dbReference>
<dbReference type="InterPro" id="IPR006264">
    <property type="entry name" value="EPSP_synthase"/>
</dbReference>
<dbReference type="InterPro" id="IPR023193">
    <property type="entry name" value="EPSP_synthase_CS"/>
</dbReference>
<dbReference type="InterPro" id="IPR013792">
    <property type="entry name" value="RNA3'P_cycl/enolpyr_Trfase_a/b"/>
</dbReference>
<dbReference type="NCBIfam" id="TIGR01356">
    <property type="entry name" value="aroA"/>
    <property type="match status" value="1"/>
</dbReference>
<dbReference type="PANTHER" id="PTHR21090">
    <property type="entry name" value="AROM/DEHYDROQUINATE SYNTHASE"/>
    <property type="match status" value="1"/>
</dbReference>
<dbReference type="PANTHER" id="PTHR21090:SF5">
    <property type="entry name" value="PENTAFUNCTIONAL AROM POLYPEPTIDE"/>
    <property type="match status" value="1"/>
</dbReference>
<dbReference type="Pfam" id="PF00275">
    <property type="entry name" value="EPSP_synthase"/>
    <property type="match status" value="1"/>
</dbReference>
<dbReference type="PIRSF" id="PIRSF000505">
    <property type="entry name" value="EPSPS"/>
    <property type="match status" value="1"/>
</dbReference>
<dbReference type="SUPFAM" id="SSF55205">
    <property type="entry name" value="EPT/RTPC-like"/>
    <property type="match status" value="1"/>
</dbReference>
<dbReference type="PROSITE" id="PS00104">
    <property type="entry name" value="EPSP_SYNTHASE_1"/>
    <property type="match status" value="1"/>
</dbReference>
<dbReference type="PROSITE" id="PS00885">
    <property type="entry name" value="EPSP_SYNTHASE_2"/>
    <property type="match status" value="1"/>
</dbReference>
<organism>
    <name type="scientific">Thermoanaerobacter sp. (strain X514)</name>
    <dbReference type="NCBI Taxonomy" id="399726"/>
    <lineage>
        <taxon>Bacteria</taxon>
        <taxon>Bacillati</taxon>
        <taxon>Bacillota</taxon>
        <taxon>Clostridia</taxon>
        <taxon>Thermoanaerobacterales</taxon>
        <taxon>Thermoanaerobacteraceae</taxon>
        <taxon>Thermoanaerobacter</taxon>
    </lineage>
</organism>
<proteinExistence type="inferred from homology"/>
<evidence type="ECO:0000255" key="1">
    <source>
        <dbReference type="HAMAP-Rule" id="MF_00210"/>
    </source>
</evidence>
<sequence length="423" mass="46151">MDIEVKKKRFLKGVISVPGDKSISHRAVMIGSIAEGITEIENFLLGEDCISTINCMKNLGVDIELKGTNVKVQGKGLYLNKSEKILDVGNSGTTIRLLMGILAGQKFETTLTGDDSIKRRPMGRVITPLSMMGAKIEAREGNFAPLTVFGNKLKGIYYKMPIASAQVKSSIMLASLYADDKTTIEEPYPSRNHTELMFSSFGAKVEVNGTKITCYPGYKLQGQKVIVPGDISSAAYFIVAATLVPNSEVTIKNVNVNPTRTGIIDVIKEMGGDIVLTNERTINNEKVADITVKTSRLKGIEIGGSLIPRLIDEIPVIAVAAVFAEGKTVIKDAEELKVKESNRINTITSELKKMGAKIFETEDGMIIEGTGFLKGNTVESYNDHRIAMSLWVAGLMAEGETKIKNAECVNISYPDFYKTFDML</sequence>
<comment type="function">
    <text evidence="1">Catalyzes the transfer of the enolpyruvyl moiety of phosphoenolpyruvate (PEP) to the 5-hydroxyl of shikimate-3-phosphate (S3P) to produce enolpyruvyl shikimate-3-phosphate and inorganic phosphate.</text>
</comment>
<comment type="catalytic activity">
    <reaction evidence="1">
        <text>3-phosphoshikimate + phosphoenolpyruvate = 5-O-(1-carboxyvinyl)-3-phosphoshikimate + phosphate</text>
        <dbReference type="Rhea" id="RHEA:21256"/>
        <dbReference type="ChEBI" id="CHEBI:43474"/>
        <dbReference type="ChEBI" id="CHEBI:57701"/>
        <dbReference type="ChEBI" id="CHEBI:58702"/>
        <dbReference type="ChEBI" id="CHEBI:145989"/>
        <dbReference type="EC" id="2.5.1.19"/>
    </reaction>
    <physiologicalReaction direction="left-to-right" evidence="1">
        <dbReference type="Rhea" id="RHEA:21257"/>
    </physiologicalReaction>
</comment>
<comment type="pathway">
    <text evidence="1">Metabolic intermediate biosynthesis; chorismate biosynthesis; chorismate from D-erythrose 4-phosphate and phosphoenolpyruvate: step 6/7.</text>
</comment>
<comment type="subunit">
    <text evidence="1">Monomer.</text>
</comment>
<comment type="subcellular location">
    <subcellularLocation>
        <location evidence="1">Cytoplasm</location>
    </subcellularLocation>
</comment>
<comment type="similarity">
    <text evidence="1">Belongs to the EPSP synthase family.</text>
</comment>
<protein>
    <recommendedName>
        <fullName evidence="1">3-phosphoshikimate 1-carboxyvinyltransferase</fullName>
        <ecNumber evidence="1">2.5.1.19</ecNumber>
    </recommendedName>
    <alternativeName>
        <fullName evidence="1">5-enolpyruvylshikimate-3-phosphate synthase</fullName>
        <shortName evidence="1">EPSP synthase</shortName>
        <shortName evidence="1">EPSPS</shortName>
    </alternativeName>
</protein>
<feature type="chain" id="PRO_1000099760" description="3-phosphoshikimate 1-carboxyvinyltransferase">
    <location>
        <begin position="1"/>
        <end position="423"/>
    </location>
</feature>
<feature type="active site" description="Proton acceptor" evidence="1">
    <location>
        <position position="312"/>
    </location>
</feature>
<feature type="binding site" evidence="1">
    <location>
        <position position="21"/>
    </location>
    <ligand>
        <name>3-phosphoshikimate</name>
        <dbReference type="ChEBI" id="CHEBI:145989"/>
    </ligand>
</feature>
<feature type="binding site" evidence="1">
    <location>
        <position position="21"/>
    </location>
    <ligand>
        <name>phosphoenolpyruvate</name>
        <dbReference type="ChEBI" id="CHEBI:58702"/>
    </ligand>
</feature>
<feature type="binding site" evidence="1">
    <location>
        <position position="22"/>
    </location>
    <ligand>
        <name>3-phosphoshikimate</name>
        <dbReference type="ChEBI" id="CHEBI:145989"/>
    </ligand>
</feature>
<feature type="binding site" evidence="1">
    <location>
        <position position="26"/>
    </location>
    <ligand>
        <name>3-phosphoshikimate</name>
        <dbReference type="ChEBI" id="CHEBI:145989"/>
    </ligand>
</feature>
<feature type="binding site" evidence="1">
    <location>
        <position position="92"/>
    </location>
    <ligand>
        <name>phosphoenolpyruvate</name>
        <dbReference type="ChEBI" id="CHEBI:58702"/>
    </ligand>
</feature>
<feature type="binding site" evidence="1">
    <location>
        <position position="120"/>
    </location>
    <ligand>
        <name>phosphoenolpyruvate</name>
        <dbReference type="ChEBI" id="CHEBI:58702"/>
    </ligand>
</feature>
<feature type="binding site" evidence="1">
    <location>
        <position position="164"/>
    </location>
    <ligand>
        <name>3-phosphoshikimate</name>
        <dbReference type="ChEBI" id="CHEBI:145989"/>
    </ligand>
</feature>
<feature type="binding site" evidence="1">
    <location>
        <position position="166"/>
    </location>
    <ligand>
        <name>3-phosphoshikimate</name>
        <dbReference type="ChEBI" id="CHEBI:145989"/>
    </ligand>
</feature>
<feature type="binding site" evidence="1">
    <location>
        <position position="166"/>
    </location>
    <ligand>
        <name>phosphoenolpyruvate</name>
        <dbReference type="ChEBI" id="CHEBI:58702"/>
    </ligand>
</feature>
<feature type="binding site" evidence="1">
    <location>
        <position position="312"/>
    </location>
    <ligand>
        <name>3-phosphoshikimate</name>
        <dbReference type="ChEBI" id="CHEBI:145989"/>
    </ligand>
</feature>
<feature type="binding site" evidence="1">
    <location>
        <position position="339"/>
    </location>
    <ligand>
        <name>3-phosphoshikimate</name>
        <dbReference type="ChEBI" id="CHEBI:145989"/>
    </ligand>
</feature>
<feature type="binding site" evidence="1">
    <location>
        <position position="343"/>
    </location>
    <ligand>
        <name>phosphoenolpyruvate</name>
        <dbReference type="ChEBI" id="CHEBI:58702"/>
    </ligand>
</feature>
<feature type="binding site" evidence="1">
    <location>
        <position position="385"/>
    </location>
    <ligand>
        <name>phosphoenolpyruvate</name>
        <dbReference type="ChEBI" id="CHEBI:58702"/>
    </ligand>
</feature>
<keyword id="KW-0028">Amino-acid biosynthesis</keyword>
<keyword id="KW-0057">Aromatic amino acid biosynthesis</keyword>
<keyword id="KW-0963">Cytoplasm</keyword>
<keyword id="KW-0808">Transferase</keyword>